<organism>
    <name type="scientific">Mus musculus</name>
    <name type="common">Mouse</name>
    <dbReference type="NCBI Taxonomy" id="10090"/>
    <lineage>
        <taxon>Eukaryota</taxon>
        <taxon>Metazoa</taxon>
        <taxon>Chordata</taxon>
        <taxon>Craniata</taxon>
        <taxon>Vertebrata</taxon>
        <taxon>Euteleostomi</taxon>
        <taxon>Mammalia</taxon>
        <taxon>Eutheria</taxon>
        <taxon>Euarchontoglires</taxon>
        <taxon>Glires</taxon>
        <taxon>Rodentia</taxon>
        <taxon>Myomorpha</taxon>
        <taxon>Muroidea</taxon>
        <taxon>Muridae</taxon>
        <taxon>Murinae</taxon>
        <taxon>Mus</taxon>
        <taxon>Mus</taxon>
    </lineage>
</organism>
<proteinExistence type="evidence at protein level"/>
<name>TSN7_MOUSE</name>
<comment type="function">
    <text>May be involved in cell proliferation and cell motility.</text>
</comment>
<comment type="subcellular location">
    <subcellularLocation>
        <location>Membrane</location>
        <topology>Multi-pass membrane protein</topology>
    </subcellularLocation>
</comment>
<comment type="similarity">
    <text evidence="2">Belongs to the tetraspanin (TM4SF) family.</text>
</comment>
<comment type="sequence caution" evidence="2">
    <conflict type="erroneous initiation">
        <sequence resource="EMBL-CDS" id="AAC34579"/>
    </conflict>
</comment>
<comment type="sequence caution" evidence="2">
    <conflict type="erroneous initiation">
        <sequence resource="EMBL-CDS" id="BAA05493"/>
    </conflict>
</comment>
<evidence type="ECO:0000255" key="1"/>
<evidence type="ECO:0000305" key="2"/>
<reference key="1">
    <citation type="submission" date="1995-03" db="EMBL/GenBank/DDBJ databases">
        <title>Molecular cloning and expression of mouse PE31 (TALLA).</title>
        <authorList>
            <person name="Nagira M."/>
            <person name="Ishikawa K."/>
            <person name="Fujikawa K."/>
            <person name="Takagi S."/>
            <person name="Yoshie O."/>
        </authorList>
    </citation>
    <scope>NUCLEOTIDE SEQUENCE [MRNA] OF 5-249</scope>
    <source>
        <strain>BALB/cJ</strain>
        <tissue>Brain</tissue>
    </source>
</reference>
<reference key="2">
    <citation type="journal article" date="1999" name="Neurosci. Res.">
        <title>Molecular cloning of a cDNA encoding mouse A15, a member of the transmembrane 4 superfamily, and its preferential expression in brain neurons.</title>
        <authorList>
            <person name="Hosokawa Y."/>
            <person name="Ueyama E."/>
            <person name="Morikawa Y."/>
            <person name="Maeda Y."/>
            <person name="Seto M."/>
            <person name="Senba E."/>
        </authorList>
    </citation>
    <scope>NUCLEOTIDE SEQUENCE [MRNA] OF 5-249</scope>
    <source>
        <strain>C57BL/6J</strain>
        <tissue>Spleen</tissue>
    </source>
</reference>
<reference key="3">
    <citation type="journal article" date="2005" name="Science">
        <title>The transcriptional landscape of the mammalian genome.</title>
        <authorList>
            <person name="Carninci P."/>
            <person name="Kasukawa T."/>
            <person name="Katayama S."/>
            <person name="Gough J."/>
            <person name="Frith M.C."/>
            <person name="Maeda N."/>
            <person name="Oyama R."/>
            <person name="Ravasi T."/>
            <person name="Lenhard B."/>
            <person name="Wells C."/>
            <person name="Kodzius R."/>
            <person name="Shimokawa K."/>
            <person name="Bajic V.B."/>
            <person name="Brenner S.E."/>
            <person name="Batalov S."/>
            <person name="Forrest A.R."/>
            <person name="Zavolan M."/>
            <person name="Davis M.J."/>
            <person name="Wilming L.G."/>
            <person name="Aidinis V."/>
            <person name="Allen J.E."/>
            <person name="Ambesi-Impiombato A."/>
            <person name="Apweiler R."/>
            <person name="Aturaliya R.N."/>
            <person name="Bailey T.L."/>
            <person name="Bansal M."/>
            <person name="Baxter L."/>
            <person name="Beisel K.W."/>
            <person name="Bersano T."/>
            <person name="Bono H."/>
            <person name="Chalk A.M."/>
            <person name="Chiu K.P."/>
            <person name="Choudhary V."/>
            <person name="Christoffels A."/>
            <person name="Clutterbuck D.R."/>
            <person name="Crowe M.L."/>
            <person name="Dalla E."/>
            <person name="Dalrymple B.P."/>
            <person name="de Bono B."/>
            <person name="Della Gatta G."/>
            <person name="di Bernardo D."/>
            <person name="Down T."/>
            <person name="Engstrom P."/>
            <person name="Fagiolini M."/>
            <person name="Faulkner G."/>
            <person name="Fletcher C.F."/>
            <person name="Fukushima T."/>
            <person name="Furuno M."/>
            <person name="Futaki S."/>
            <person name="Gariboldi M."/>
            <person name="Georgii-Hemming P."/>
            <person name="Gingeras T.R."/>
            <person name="Gojobori T."/>
            <person name="Green R.E."/>
            <person name="Gustincich S."/>
            <person name="Harbers M."/>
            <person name="Hayashi Y."/>
            <person name="Hensch T.K."/>
            <person name="Hirokawa N."/>
            <person name="Hill D."/>
            <person name="Huminiecki L."/>
            <person name="Iacono M."/>
            <person name="Ikeo K."/>
            <person name="Iwama A."/>
            <person name="Ishikawa T."/>
            <person name="Jakt M."/>
            <person name="Kanapin A."/>
            <person name="Katoh M."/>
            <person name="Kawasawa Y."/>
            <person name="Kelso J."/>
            <person name="Kitamura H."/>
            <person name="Kitano H."/>
            <person name="Kollias G."/>
            <person name="Krishnan S.P."/>
            <person name="Kruger A."/>
            <person name="Kummerfeld S.K."/>
            <person name="Kurochkin I.V."/>
            <person name="Lareau L.F."/>
            <person name="Lazarevic D."/>
            <person name="Lipovich L."/>
            <person name="Liu J."/>
            <person name="Liuni S."/>
            <person name="McWilliam S."/>
            <person name="Madan Babu M."/>
            <person name="Madera M."/>
            <person name="Marchionni L."/>
            <person name="Matsuda H."/>
            <person name="Matsuzawa S."/>
            <person name="Miki H."/>
            <person name="Mignone F."/>
            <person name="Miyake S."/>
            <person name="Morris K."/>
            <person name="Mottagui-Tabar S."/>
            <person name="Mulder N."/>
            <person name="Nakano N."/>
            <person name="Nakauchi H."/>
            <person name="Ng P."/>
            <person name="Nilsson R."/>
            <person name="Nishiguchi S."/>
            <person name="Nishikawa S."/>
            <person name="Nori F."/>
            <person name="Ohara O."/>
            <person name="Okazaki Y."/>
            <person name="Orlando V."/>
            <person name="Pang K.C."/>
            <person name="Pavan W.J."/>
            <person name="Pavesi G."/>
            <person name="Pesole G."/>
            <person name="Petrovsky N."/>
            <person name="Piazza S."/>
            <person name="Reed J."/>
            <person name="Reid J.F."/>
            <person name="Ring B.Z."/>
            <person name="Ringwald M."/>
            <person name="Rost B."/>
            <person name="Ruan Y."/>
            <person name="Salzberg S.L."/>
            <person name="Sandelin A."/>
            <person name="Schneider C."/>
            <person name="Schoenbach C."/>
            <person name="Sekiguchi K."/>
            <person name="Semple C.A."/>
            <person name="Seno S."/>
            <person name="Sessa L."/>
            <person name="Sheng Y."/>
            <person name="Shibata Y."/>
            <person name="Shimada H."/>
            <person name="Shimada K."/>
            <person name="Silva D."/>
            <person name="Sinclair B."/>
            <person name="Sperling S."/>
            <person name="Stupka E."/>
            <person name="Sugiura K."/>
            <person name="Sultana R."/>
            <person name="Takenaka Y."/>
            <person name="Taki K."/>
            <person name="Tammoja K."/>
            <person name="Tan S.L."/>
            <person name="Tang S."/>
            <person name="Taylor M.S."/>
            <person name="Tegner J."/>
            <person name="Teichmann S.A."/>
            <person name="Ueda H.R."/>
            <person name="van Nimwegen E."/>
            <person name="Verardo R."/>
            <person name="Wei C.L."/>
            <person name="Yagi K."/>
            <person name="Yamanishi H."/>
            <person name="Zabarovsky E."/>
            <person name="Zhu S."/>
            <person name="Zimmer A."/>
            <person name="Hide W."/>
            <person name="Bult C."/>
            <person name="Grimmond S.M."/>
            <person name="Teasdale R.D."/>
            <person name="Liu E.T."/>
            <person name="Brusic V."/>
            <person name="Quackenbush J."/>
            <person name="Wahlestedt C."/>
            <person name="Mattick J.S."/>
            <person name="Hume D.A."/>
            <person name="Kai C."/>
            <person name="Sasaki D."/>
            <person name="Tomaru Y."/>
            <person name="Fukuda S."/>
            <person name="Kanamori-Katayama M."/>
            <person name="Suzuki M."/>
            <person name="Aoki J."/>
            <person name="Arakawa T."/>
            <person name="Iida J."/>
            <person name="Imamura K."/>
            <person name="Itoh M."/>
            <person name="Kato T."/>
            <person name="Kawaji H."/>
            <person name="Kawagashira N."/>
            <person name="Kawashima T."/>
            <person name="Kojima M."/>
            <person name="Kondo S."/>
            <person name="Konno H."/>
            <person name="Nakano K."/>
            <person name="Ninomiya N."/>
            <person name="Nishio T."/>
            <person name="Okada M."/>
            <person name="Plessy C."/>
            <person name="Shibata K."/>
            <person name="Shiraki T."/>
            <person name="Suzuki S."/>
            <person name="Tagami M."/>
            <person name="Waki K."/>
            <person name="Watahiki A."/>
            <person name="Okamura-Oho Y."/>
            <person name="Suzuki H."/>
            <person name="Kawai J."/>
            <person name="Hayashizaki Y."/>
        </authorList>
    </citation>
    <scope>NUCLEOTIDE SEQUENCE [LARGE SCALE MRNA]</scope>
    <source>
        <strain>C57BL/6J</strain>
        <tissue>Lung</tissue>
    </source>
</reference>
<reference key="4">
    <citation type="journal article" date="2010" name="Cell">
        <title>A tissue-specific atlas of mouse protein phosphorylation and expression.</title>
        <authorList>
            <person name="Huttlin E.L."/>
            <person name="Jedrychowski M.P."/>
            <person name="Elias J.E."/>
            <person name="Goswami T."/>
            <person name="Rad R."/>
            <person name="Beausoleil S.A."/>
            <person name="Villen J."/>
            <person name="Haas W."/>
            <person name="Sowa M.E."/>
            <person name="Gygi S.P."/>
        </authorList>
    </citation>
    <scope>IDENTIFICATION BY MASS SPECTROMETRY [LARGE SCALE ANALYSIS]</scope>
    <source>
        <tissue>Brain</tissue>
        <tissue>Lung</tissue>
    </source>
</reference>
<accession>Q62283</accession>
<accession>O88429</accession>
<accession>Q9DBS3</accession>
<feature type="chain" id="PRO_0000219249" description="Tetraspanin-7">
    <location>
        <begin position="1"/>
        <end position="249"/>
    </location>
</feature>
<feature type="topological domain" description="Cytoplasmic" evidence="1">
    <location>
        <begin position="1"/>
        <end position="16"/>
    </location>
</feature>
<feature type="transmembrane region" description="Helical" evidence="1">
    <location>
        <begin position="17"/>
        <end position="40"/>
    </location>
</feature>
<feature type="topological domain" description="Extracellular" evidence="1">
    <location>
        <begin position="41"/>
        <end position="56"/>
    </location>
</feature>
<feature type="transmembrane region" description="Helical" evidence="1">
    <location>
        <begin position="57"/>
        <end position="75"/>
    </location>
</feature>
<feature type="topological domain" description="Cytoplasmic" evidence="1">
    <location>
        <begin position="76"/>
        <end position="86"/>
    </location>
</feature>
<feature type="transmembrane region" description="Helical" evidence="1">
    <location>
        <begin position="87"/>
        <end position="112"/>
    </location>
</feature>
<feature type="topological domain" description="Extracellular" evidence="1">
    <location>
        <begin position="113"/>
        <end position="213"/>
    </location>
</feature>
<feature type="transmembrane region" description="Helical" evidence="1">
    <location>
        <begin position="214"/>
        <end position="234"/>
    </location>
</feature>
<feature type="topological domain" description="Cytoplasmic" evidence="1">
    <location>
        <begin position="235"/>
        <end position="249"/>
    </location>
</feature>
<feature type="glycosylation site" description="N-linked (GlcNAc...) asparagine" evidence="1">
    <location>
        <position position="54"/>
    </location>
</feature>
<feature type="glycosylation site" description="N-linked (GlcNAc...) asparagine" evidence="1">
    <location>
        <position position="155"/>
    </location>
</feature>
<feature type="glycosylation site" description="N-linked (GlcNAc...) asparagine" evidence="1">
    <location>
        <position position="158"/>
    </location>
</feature>
<feature type="glycosylation site" description="N-linked (GlcNAc...) asparagine" evidence="1">
    <location>
        <position position="177"/>
    </location>
</feature>
<feature type="glycosylation site" description="N-linked (GlcNAc...) asparagine" evidence="1">
    <location>
        <position position="188"/>
    </location>
</feature>
<feature type="sequence conflict" description="In Ref. 2; AAC34579." evidence="2" ref="2">
    <original>R</original>
    <variation>P</variation>
    <location>
        <position position="146"/>
    </location>
</feature>
<sequence>MASRRMETKPVITCLKTLLIIYSFVFWITGVILLAVGVWGKLTLGTYISLIAENSTNAPYVLIGTGTTIVVFGLFGCFATCRGSPWMLKLYAMFLSLVFLAELVAGISGFVFRHEIKDTFLRTYTDAMQNYNGNDERSRAVDHVQRSLSCCGVQNYTNWSSSPYFLDHGIPPSCCMNETDCNPLDLHNLTVAATKVNQKGCYDLVTSFMETNMGIIAGVAFGIAFSQLIGMLLACCLSRFITANQYEMV</sequence>
<dbReference type="EMBL" id="D26483">
    <property type="protein sequence ID" value="BAA05493.1"/>
    <property type="status" value="ALT_INIT"/>
    <property type="molecule type" value="mRNA"/>
</dbReference>
<dbReference type="EMBL" id="AF052492">
    <property type="protein sequence ID" value="AAC34579.1"/>
    <property type="status" value="ALT_INIT"/>
    <property type="molecule type" value="mRNA"/>
</dbReference>
<dbReference type="EMBL" id="AK004776">
    <property type="protein sequence ID" value="BAB23554.1"/>
    <property type="molecule type" value="mRNA"/>
</dbReference>
<dbReference type="CCDS" id="CCDS30016.1"/>
<dbReference type="RefSeq" id="NP_062608.2">
    <property type="nucleotide sequence ID" value="NM_019634.2"/>
</dbReference>
<dbReference type="SMR" id="Q62283"/>
<dbReference type="BioGRID" id="204231">
    <property type="interactions" value="2"/>
</dbReference>
<dbReference type="FunCoup" id="Q62283">
    <property type="interactions" value="40"/>
</dbReference>
<dbReference type="STRING" id="10090.ENSMUSP00000075692"/>
<dbReference type="GlyCosmos" id="Q62283">
    <property type="glycosylation" value="5 sites, No reported glycans"/>
</dbReference>
<dbReference type="GlyGen" id="Q62283">
    <property type="glycosylation" value="5 sites"/>
</dbReference>
<dbReference type="PhosphoSitePlus" id="Q62283"/>
<dbReference type="SwissPalm" id="Q62283"/>
<dbReference type="jPOST" id="Q62283"/>
<dbReference type="PaxDb" id="10090-ENSMUSP00000075692"/>
<dbReference type="PeptideAtlas" id="Q62283"/>
<dbReference type="ProteomicsDB" id="297995"/>
<dbReference type="DNASU" id="21912"/>
<dbReference type="Ensembl" id="ENSMUST00000076354.13">
    <property type="protein sequence ID" value="ENSMUSP00000075692.7"/>
    <property type="gene ID" value="ENSMUSG00000058254.13"/>
</dbReference>
<dbReference type="GeneID" id="21912"/>
<dbReference type="KEGG" id="mmu:21912"/>
<dbReference type="UCSC" id="uc009sqm.1">
    <property type="organism name" value="mouse"/>
</dbReference>
<dbReference type="AGR" id="MGI:1298407"/>
<dbReference type="CTD" id="7102"/>
<dbReference type="MGI" id="MGI:1298407">
    <property type="gene designation" value="Tspan7"/>
</dbReference>
<dbReference type="VEuPathDB" id="HostDB:ENSMUSG00000058254"/>
<dbReference type="eggNOG" id="KOG3882">
    <property type="taxonomic scope" value="Eukaryota"/>
</dbReference>
<dbReference type="GeneTree" id="ENSGT00940000156153"/>
<dbReference type="HOGENOM" id="CLU_055524_3_0_1"/>
<dbReference type="InParanoid" id="Q62283"/>
<dbReference type="OMA" id="NWSTSHY"/>
<dbReference type="OrthoDB" id="9972904at2759"/>
<dbReference type="PhylomeDB" id="Q62283"/>
<dbReference type="TreeFam" id="TF352891"/>
<dbReference type="Reactome" id="R-MMU-416993">
    <property type="pathway name" value="Trafficking of GluR2-containing AMPA receptors"/>
</dbReference>
<dbReference type="BioGRID-ORCS" id="21912">
    <property type="hits" value="1 hit in 78 CRISPR screens"/>
</dbReference>
<dbReference type="ChiTaRS" id="Tspan7">
    <property type="organism name" value="mouse"/>
</dbReference>
<dbReference type="PRO" id="PR:Q62283"/>
<dbReference type="Proteomes" id="UP000000589">
    <property type="component" value="Chromosome X"/>
</dbReference>
<dbReference type="RNAct" id="Q62283">
    <property type="molecule type" value="protein"/>
</dbReference>
<dbReference type="Bgee" id="ENSMUSG00000058254">
    <property type="expression patterns" value="Expressed in dentate gyrus of hippocampal formation granule cell and 263 other cell types or tissues"/>
</dbReference>
<dbReference type="ExpressionAtlas" id="Q62283">
    <property type="expression patterns" value="baseline and differential"/>
</dbReference>
<dbReference type="GO" id="GO:0016020">
    <property type="term" value="C:membrane"/>
    <property type="evidence" value="ECO:0007669"/>
    <property type="project" value="UniProtKB-SubCell"/>
</dbReference>
<dbReference type="GO" id="GO:0098794">
    <property type="term" value="C:postsynapse"/>
    <property type="evidence" value="ECO:0007669"/>
    <property type="project" value="Ensembl"/>
</dbReference>
<dbReference type="GO" id="GO:0099149">
    <property type="term" value="P:regulation of postsynaptic neurotransmitter receptor internalization"/>
    <property type="evidence" value="ECO:0007669"/>
    <property type="project" value="Ensembl"/>
</dbReference>
<dbReference type="CDD" id="cd03161">
    <property type="entry name" value="TM4SF2_6_like_LEL"/>
    <property type="match status" value="1"/>
</dbReference>
<dbReference type="FunFam" id="1.10.1450.10:FF:000003">
    <property type="entry name" value="Tetraspanin"/>
    <property type="match status" value="1"/>
</dbReference>
<dbReference type="Gene3D" id="1.10.1450.10">
    <property type="entry name" value="Tetraspanin"/>
    <property type="match status" value="1"/>
</dbReference>
<dbReference type="InterPro" id="IPR018499">
    <property type="entry name" value="Tetraspanin/Peripherin"/>
</dbReference>
<dbReference type="InterPro" id="IPR000301">
    <property type="entry name" value="Tetraspanin_animals"/>
</dbReference>
<dbReference type="InterPro" id="IPR018503">
    <property type="entry name" value="Tetraspanin_CS"/>
</dbReference>
<dbReference type="InterPro" id="IPR008952">
    <property type="entry name" value="Tetraspanin_EC2_sf"/>
</dbReference>
<dbReference type="InterPro" id="IPR048232">
    <property type="entry name" value="TSN6/7_LEL"/>
</dbReference>
<dbReference type="PANTHER" id="PTHR19282">
    <property type="entry name" value="TETRASPANIN"/>
    <property type="match status" value="1"/>
</dbReference>
<dbReference type="PANTHER" id="PTHR19282:SF257">
    <property type="entry name" value="TETRASPANIN-7"/>
    <property type="match status" value="1"/>
</dbReference>
<dbReference type="Pfam" id="PF00335">
    <property type="entry name" value="Tetraspanin"/>
    <property type="match status" value="1"/>
</dbReference>
<dbReference type="PIRSF" id="PIRSF002419">
    <property type="entry name" value="Tetraspanin"/>
    <property type="match status" value="1"/>
</dbReference>
<dbReference type="PRINTS" id="PR00259">
    <property type="entry name" value="TMFOUR"/>
</dbReference>
<dbReference type="SUPFAM" id="SSF48652">
    <property type="entry name" value="Tetraspanin"/>
    <property type="match status" value="1"/>
</dbReference>
<dbReference type="PROSITE" id="PS00421">
    <property type="entry name" value="TM4_1"/>
    <property type="match status" value="1"/>
</dbReference>
<protein>
    <recommendedName>
        <fullName>Tetraspanin-7</fullName>
        <shortName>Tspan-7</shortName>
    </recommendedName>
    <alternativeName>
        <fullName>Cell surface glycoprotein A15</fullName>
    </alternativeName>
    <alternativeName>
        <fullName>PE31</fullName>
    </alternativeName>
    <alternativeName>
        <fullName>TALLA homolog</fullName>
    </alternativeName>
    <alternativeName>
        <fullName>Transmembrane 4 superfamily member 2</fullName>
    </alternativeName>
    <cdAntigenName>CD231</cdAntigenName>
</protein>
<keyword id="KW-0325">Glycoprotein</keyword>
<keyword id="KW-0472">Membrane</keyword>
<keyword id="KW-1185">Reference proteome</keyword>
<keyword id="KW-0812">Transmembrane</keyword>
<keyword id="KW-1133">Transmembrane helix</keyword>
<gene>
    <name type="primary">Tspan7</name>
    <name type="synonym">Mxs1</name>
    <name type="synonym">Tm4sf2</name>
</gene>